<reference key="1">
    <citation type="journal article" date="2009" name="J. Bacteriol.">
        <title>Complete genome sequence and comparative genome analysis of enteropathogenic Escherichia coli O127:H6 strain E2348/69.</title>
        <authorList>
            <person name="Iguchi A."/>
            <person name="Thomson N.R."/>
            <person name="Ogura Y."/>
            <person name="Saunders D."/>
            <person name="Ooka T."/>
            <person name="Henderson I.R."/>
            <person name="Harris D."/>
            <person name="Asadulghani M."/>
            <person name="Kurokawa K."/>
            <person name="Dean P."/>
            <person name="Kenny B."/>
            <person name="Quail M.A."/>
            <person name="Thurston S."/>
            <person name="Dougan G."/>
            <person name="Hayashi T."/>
            <person name="Parkhill J."/>
            <person name="Frankel G."/>
        </authorList>
    </citation>
    <scope>NUCLEOTIDE SEQUENCE [LARGE SCALE GENOMIC DNA]</scope>
    <source>
        <strain>E2348/69 / EPEC</strain>
    </source>
</reference>
<organism>
    <name type="scientific">Escherichia coli O127:H6 (strain E2348/69 / EPEC)</name>
    <dbReference type="NCBI Taxonomy" id="574521"/>
    <lineage>
        <taxon>Bacteria</taxon>
        <taxon>Pseudomonadati</taxon>
        <taxon>Pseudomonadota</taxon>
        <taxon>Gammaproteobacteria</taxon>
        <taxon>Enterobacterales</taxon>
        <taxon>Enterobacteriaceae</taxon>
        <taxon>Escherichia</taxon>
    </lineage>
</organism>
<comment type="function">
    <text evidence="1">Binds as a heterodimer with protein bS6 to the central domain of the 16S rRNA, where it helps stabilize the platform of the 30S subunit.</text>
</comment>
<comment type="subunit">
    <text evidence="1">Part of the 30S ribosomal subunit. Forms a tight heterodimer with protein bS6.</text>
</comment>
<comment type="similarity">
    <text evidence="1">Belongs to the bacterial ribosomal protein bS18 family.</text>
</comment>
<proteinExistence type="inferred from homology"/>
<keyword id="KW-1185">Reference proteome</keyword>
<keyword id="KW-0687">Ribonucleoprotein</keyword>
<keyword id="KW-0689">Ribosomal protein</keyword>
<keyword id="KW-0694">RNA-binding</keyword>
<keyword id="KW-0699">rRNA-binding</keyword>
<sequence>MARYFRRRKFCRFTAEGVQEIDYKDIATLKNYITESGKIVPSRITGTRAKYQRQLARAIKRARYLSLLPYTDRHQ</sequence>
<dbReference type="EMBL" id="FM180568">
    <property type="protein sequence ID" value="CAS12073.1"/>
    <property type="molecule type" value="Genomic_DNA"/>
</dbReference>
<dbReference type="RefSeq" id="WP_000135199.1">
    <property type="nucleotide sequence ID" value="NC_011601.1"/>
</dbReference>
<dbReference type="SMR" id="B7UQL1"/>
<dbReference type="GeneID" id="98186237"/>
<dbReference type="KEGG" id="ecg:E2348C_4525"/>
<dbReference type="HOGENOM" id="CLU_148710_2_3_6"/>
<dbReference type="Proteomes" id="UP000008205">
    <property type="component" value="Chromosome"/>
</dbReference>
<dbReference type="GO" id="GO:0022627">
    <property type="term" value="C:cytosolic small ribosomal subunit"/>
    <property type="evidence" value="ECO:0007669"/>
    <property type="project" value="TreeGrafter"/>
</dbReference>
<dbReference type="GO" id="GO:0070181">
    <property type="term" value="F:small ribosomal subunit rRNA binding"/>
    <property type="evidence" value="ECO:0007669"/>
    <property type="project" value="TreeGrafter"/>
</dbReference>
<dbReference type="GO" id="GO:0003735">
    <property type="term" value="F:structural constituent of ribosome"/>
    <property type="evidence" value="ECO:0007669"/>
    <property type="project" value="InterPro"/>
</dbReference>
<dbReference type="GO" id="GO:0006412">
    <property type="term" value="P:translation"/>
    <property type="evidence" value="ECO:0007669"/>
    <property type="project" value="UniProtKB-UniRule"/>
</dbReference>
<dbReference type="FunFam" id="4.10.640.10:FF:000001">
    <property type="entry name" value="30S ribosomal protein S18"/>
    <property type="match status" value="1"/>
</dbReference>
<dbReference type="Gene3D" id="4.10.640.10">
    <property type="entry name" value="Ribosomal protein S18"/>
    <property type="match status" value="1"/>
</dbReference>
<dbReference type="HAMAP" id="MF_00270">
    <property type="entry name" value="Ribosomal_bS18"/>
    <property type="match status" value="1"/>
</dbReference>
<dbReference type="InterPro" id="IPR001648">
    <property type="entry name" value="Ribosomal_bS18"/>
</dbReference>
<dbReference type="InterPro" id="IPR018275">
    <property type="entry name" value="Ribosomal_bS18_CS"/>
</dbReference>
<dbReference type="InterPro" id="IPR036870">
    <property type="entry name" value="Ribosomal_bS18_sf"/>
</dbReference>
<dbReference type="NCBIfam" id="TIGR00165">
    <property type="entry name" value="S18"/>
    <property type="match status" value="1"/>
</dbReference>
<dbReference type="PANTHER" id="PTHR13479">
    <property type="entry name" value="30S RIBOSOMAL PROTEIN S18"/>
    <property type="match status" value="1"/>
</dbReference>
<dbReference type="PANTHER" id="PTHR13479:SF40">
    <property type="entry name" value="SMALL RIBOSOMAL SUBUNIT PROTEIN BS18M"/>
    <property type="match status" value="1"/>
</dbReference>
<dbReference type="Pfam" id="PF01084">
    <property type="entry name" value="Ribosomal_S18"/>
    <property type="match status" value="1"/>
</dbReference>
<dbReference type="PRINTS" id="PR00974">
    <property type="entry name" value="RIBOSOMALS18"/>
</dbReference>
<dbReference type="SUPFAM" id="SSF46911">
    <property type="entry name" value="Ribosomal protein S18"/>
    <property type="match status" value="1"/>
</dbReference>
<dbReference type="PROSITE" id="PS00057">
    <property type="entry name" value="RIBOSOMAL_S18"/>
    <property type="match status" value="1"/>
</dbReference>
<protein>
    <recommendedName>
        <fullName evidence="1">Small ribosomal subunit protein bS18</fullName>
    </recommendedName>
    <alternativeName>
        <fullName evidence="2">30S ribosomal protein S18</fullName>
    </alternativeName>
</protein>
<gene>
    <name evidence="1" type="primary">rpsR</name>
    <name type="ordered locus">E2348C_4525</name>
</gene>
<feature type="chain" id="PRO_1000125800" description="Small ribosomal subunit protein bS18">
    <location>
        <begin position="1"/>
        <end position="75"/>
    </location>
</feature>
<evidence type="ECO:0000255" key="1">
    <source>
        <dbReference type="HAMAP-Rule" id="MF_00270"/>
    </source>
</evidence>
<evidence type="ECO:0000305" key="2"/>
<name>RS18_ECO27</name>
<accession>B7UQL1</accession>